<feature type="signal peptide" evidence="2">
    <location>
        <begin position="1"/>
        <end position="22"/>
    </location>
</feature>
<feature type="chain" id="PRO_0000377522" description="Polar tube protein 1">
    <location>
        <begin position="23"/>
        <end position="371"/>
    </location>
</feature>
<feature type="region of interest" description="Disordered" evidence="3">
    <location>
        <begin position="65"/>
        <end position="95"/>
    </location>
</feature>
<feature type="region of interest" description="Disordered" evidence="3">
    <location>
        <begin position="229"/>
        <end position="270"/>
    </location>
</feature>
<feature type="compositionally biased region" description="Low complexity" evidence="3">
    <location>
        <begin position="65"/>
        <end position="94"/>
    </location>
</feature>
<feature type="compositionally biased region" description="Low complexity" evidence="3">
    <location>
        <begin position="255"/>
        <end position="270"/>
    </location>
</feature>
<comment type="function">
    <text evidence="1">Involved with PTP2 and PTP3 in formation of a polar tube through which the infectious agent is passed on to the host cell.</text>
</comment>
<comment type="subcellular location">
    <subcellularLocation>
        <location evidence="1">Spore polar tube</location>
    </subcellularLocation>
</comment>
<comment type="PTM">
    <text evidence="4">Glycosylated.</text>
</comment>
<comment type="miscellaneous">
    <text>The host antibody response is directed against the post-translational carbohydrate modification.</text>
</comment>
<keyword id="KW-0325">Glycoprotein</keyword>
<keyword id="KW-0732">Signal</keyword>
<keyword id="KW-0749">Sporulation</keyword>
<name>PTP1_ENCIN</name>
<accession>Q5F2J0</accession>
<organism>
    <name type="scientific">Encephalitozoon intestinalis</name>
    <name type="common">Microsporidian parasite</name>
    <dbReference type="NCBI Taxonomy" id="58839"/>
    <lineage>
        <taxon>Eukaryota</taxon>
        <taxon>Fungi</taxon>
        <taxon>Fungi incertae sedis</taxon>
        <taxon>Microsporidia</taxon>
        <taxon>Unikaryonidae</taxon>
        <taxon>Encephalitozoon</taxon>
    </lineage>
</organism>
<evidence type="ECO:0000250" key="1"/>
<evidence type="ECO:0000255" key="2"/>
<evidence type="ECO:0000256" key="3">
    <source>
        <dbReference type="SAM" id="MobiDB-lite"/>
    </source>
</evidence>
<evidence type="ECO:0000269" key="4">
    <source>
    </source>
</evidence>
<proteinExistence type="evidence at protein level"/>
<dbReference type="EMBL" id="AX007051">
    <property type="status" value="NOT_ANNOTATED_CDS"/>
    <property type="molecule type" value="Genomic_DNA"/>
</dbReference>
<dbReference type="EMBL" id="AJ880382">
    <property type="protein sequence ID" value="CAI54279.1"/>
    <property type="molecule type" value="Genomic_DNA"/>
</dbReference>
<dbReference type="VEuPathDB" id="MicrosporidiaDB:Eint_060150"/>
<dbReference type="GO" id="GO:0044099">
    <property type="term" value="C:polar tube"/>
    <property type="evidence" value="ECO:0007669"/>
    <property type="project" value="UniProtKB-SubCell"/>
</dbReference>
<dbReference type="GO" id="GO:0030435">
    <property type="term" value="P:sporulation resulting in formation of a cellular spore"/>
    <property type="evidence" value="ECO:0007669"/>
    <property type="project" value="UniProtKB-KW"/>
</dbReference>
<gene>
    <name type="primary">PTP1</name>
</gene>
<sequence length="371" mass="37520">MKGISKVLSASIVLMKLKGVYSTTVLCGDSTQGLQGTTQPSYVLVPSAPETIANCGYSPQNMYVPSTPTTMPSTVPGTTGESETPTSPTSSPTEDVGTCKIAVVKHCDAPGTSSTPCEPEQTLAPSQPVAATIATPLVVASVQTPQAAVTILTPKAVSAQPATIISPFNQAPGYYNSAIPGQILTGNVLSPSASSCQVVPGTTGSSTPQQLPGAVSSGTIPCQIVQGTQSSGNTPGQQFLPGIVPVGSLQPDQATSGTPTPSVSQSQSGQQCCCTPPITNPVMPTPMGISSNGYPSSTAYAPTLGQLGPCIDTQKSTSSCEPKEKPVAQYGMEACAAPTPTAVLGNAEYLLSPGMYNSLNSPCNACCQQQC</sequence>
<reference key="1">
    <citation type="journal article" date="2001" name="Infect. Immun.">
        <title>Microsporidian invasion apparatus: identification of a novel polar tube protein and evidence for clustering of ptp1 and ptp2 genes in three Encephalitozoon species.</title>
        <authorList>
            <person name="Delbac F."/>
            <person name="Peuvel I."/>
            <person name="Metenier G."/>
            <person name="Peyretaillade E."/>
            <person name="Vivares C.P."/>
        </authorList>
    </citation>
    <scope>NUCLEOTIDE SEQUENCE [GENOMIC DNA]</scope>
</reference>
<reference key="2">
    <citation type="journal article" date="2005" name="Infect. Immun.">
        <title>Carbohydrate moieties of microsporidian polar tube proteins are targeted by immunoglobulin G in immunocompetent individuals.</title>
        <authorList>
            <person name="Peek R."/>
            <person name="Delbac F."/>
            <person name="Speijer D."/>
            <person name="Polonais V."/>
            <person name="Greve S."/>
            <person name="Wentink-Bonnema E."/>
            <person name="Ringrose J."/>
            <person name="van Gool T."/>
        </authorList>
    </citation>
    <scope>IDENTIFICATION AS AN ANTIGEN</scope>
    <scope>GLYCOSYLATION</scope>
</reference>
<protein>
    <recommendedName>
        <fullName>Polar tube protein 1</fullName>
    </recommendedName>
    <alternativeName>
        <fullName>Major polar tube protein</fullName>
        <shortName>Major PTP</shortName>
    </alternativeName>
</protein>